<keyword id="KW-0003">3Fe-4S</keyword>
<keyword id="KW-0004">4Fe-4S</keyword>
<keyword id="KW-0903">Direct protein sequencing</keyword>
<keyword id="KW-0249">Electron transport</keyword>
<keyword id="KW-0408">Iron</keyword>
<keyword id="KW-0411">Iron-sulfur</keyword>
<keyword id="KW-0479">Metal-binding</keyword>
<keyword id="KW-0488">Methylation</keyword>
<keyword id="KW-0677">Repeat</keyword>
<keyword id="KW-0813">Transport</keyword>
<keyword id="KW-0862">Zinc</keyword>
<sequence>GIDPNYRTSRQVVGEHQGHKVYGPVDPPKVLGIHGTIVXVDFDLCIADG</sequence>
<proteinExistence type="evidence at protein level"/>
<dbReference type="GO" id="GO:0051538">
    <property type="term" value="F:3 iron, 4 sulfur cluster binding"/>
    <property type="evidence" value="ECO:0007669"/>
    <property type="project" value="UniProtKB-KW"/>
</dbReference>
<dbReference type="GO" id="GO:0051539">
    <property type="term" value="F:4 iron, 4 sulfur cluster binding"/>
    <property type="evidence" value="ECO:0007669"/>
    <property type="project" value="UniProtKB-KW"/>
</dbReference>
<dbReference type="GO" id="GO:0046872">
    <property type="term" value="F:metal ion binding"/>
    <property type="evidence" value="ECO:0007669"/>
    <property type="project" value="UniProtKB-KW"/>
</dbReference>
<dbReference type="Gene3D" id="3.30.70.20">
    <property type="match status" value="1"/>
</dbReference>
<reference key="1">
    <citation type="journal article" date="1998" name="J. Biol. Inorg. Chem.">
        <title>Di-cluster, seven iron ferredoxins from hyperthermophilic Sulfolobales.</title>
        <authorList>
            <person name="Gomes C.M."/>
            <person name="Faria A."/>
            <person name="Carita J."/>
            <person name="Mendes J.C."/>
            <person name="Regalla M."/>
            <person name="Chicau P."/>
            <person name="Huber H."/>
            <person name="Stetter K.O."/>
            <person name="Teixeira M."/>
        </authorList>
    </citation>
    <scope>PROTEIN SEQUENCE</scope>
    <scope>METHYLATION AT LYS-29</scope>
</reference>
<comment type="function">
    <text>Ferredoxins are iron-sulfur proteins that transfer electrons in a wide variety of metabolic reactions.</text>
</comment>
<comment type="cofactor">
    <cofactor evidence="1">
        <name>[3Fe-4S] cluster</name>
        <dbReference type="ChEBI" id="CHEBI:21137"/>
    </cofactor>
    <text evidence="1">Binds 1 [3Fe-4S] cluster.</text>
</comment>
<comment type="cofactor">
    <cofactor evidence="1">
        <name>[4Fe-4S] cluster</name>
        <dbReference type="ChEBI" id="CHEBI:49883"/>
    </cofactor>
    <text evidence="1">Binds 1 [4Fe-4S] cluster.</text>
</comment>
<comment type="cofactor">
    <cofactor evidence="1">
        <name>Zn(2+)</name>
        <dbReference type="ChEBI" id="CHEBI:29105"/>
    </cofactor>
    <text evidence="1">Binds 1 zinc ion.</text>
</comment>
<gene>
    <name type="primary">zfx</name>
</gene>
<name>FER_ACIIN</name>
<evidence type="ECO:0000250" key="1"/>
<evidence type="ECO:0000269" key="2">
    <source ref="1"/>
</evidence>
<organism>
    <name type="scientific">Acidianus infernus</name>
    <dbReference type="NCBI Taxonomy" id="12915"/>
    <lineage>
        <taxon>Archaea</taxon>
        <taxon>Thermoproteota</taxon>
        <taxon>Thermoprotei</taxon>
        <taxon>Sulfolobales</taxon>
        <taxon>Sulfolobaceae</taxon>
        <taxon>Acidianus</taxon>
    </lineage>
</organism>
<accession>P81541</accession>
<feature type="chain" id="PRO_0000159174" description="Zinc-containing ferredoxin">
    <location>
        <begin position="1"/>
        <end position="49" status="greater than"/>
    </location>
</feature>
<feature type="region of interest" description="N-terminal extension">
    <location>
        <begin position="1"/>
        <end position="36"/>
    </location>
</feature>
<feature type="region of interest" description="Ferredoxin">
    <location>
        <begin position="37"/>
        <end position="49" status="greater than"/>
    </location>
</feature>
<feature type="binding site">
    <location>
        <position position="16"/>
    </location>
    <ligand>
        <name>Zn(2+)</name>
        <dbReference type="ChEBI" id="CHEBI:29105"/>
    </ligand>
</feature>
<feature type="binding site">
    <location>
        <position position="19"/>
    </location>
    <ligand>
        <name>Zn(2+)</name>
        <dbReference type="ChEBI" id="CHEBI:29105"/>
    </ligand>
</feature>
<feature type="binding site">
    <location>
        <position position="34"/>
    </location>
    <ligand>
        <name>Zn(2+)</name>
        <dbReference type="ChEBI" id="CHEBI:29105"/>
    </ligand>
</feature>
<feature type="binding site">
    <location>
        <position position="45"/>
    </location>
    <ligand>
        <name>[3Fe-4S] cluster</name>
        <dbReference type="ChEBI" id="CHEBI:21137"/>
    </ligand>
</feature>
<feature type="modified residue" description="N6-methyllysine" evidence="2">
    <location>
        <position position="29"/>
    </location>
</feature>
<feature type="non-terminal residue">
    <location>
        <position position="49"/>
    </location>
</feature>
<protein>
    <recommendedName>
        <fullName>Zinc-containing ferredoxin</fullName>
    </recommendedName>
    <alternativeName>
        <fullName>Seven-iron ferredoxin</fullName>
    </alternativeName>
</protein>